<sequence length="250" mass="28164">MATMACASSLTFPSAQTQKSFFGTNVKQTPVLSFPRPTVAAAVAVSARKSTSASTKCTEEWRQLKEAVKKEFAIPHVPLDQRWMFTLEEATGPDIWNTTWYPKSADHVPTDKKWYVVDATDLILGRMASTIAIHIRGKNLASYTPSVDMGAFVIVVNADKVAVSGKKRTQKLYRRHSGRPGGLKEETFDQLQKRIPERIIEHAVRGMLPKGRLGRYLFNHLKVYKGAEHPHQAQQPIDLPLRDKRIRVEK</sequence>
<gene>
    <name type="primary">RPL13</name>
    <name type="ORF">SOVF_093170</name>
</gene>
<reference key="1">
    <citation type="journal article" date="1989" name="J. Biol. Chem.">
        <title>Chloroplast ribosomal protein L13 is encoded in the nucleus and is considerably larger than its bacterial homologue. Construction, immunoisolation, and nucleotide sequence (including transit peptide) its cDNA clone from an angiosperm.</title>
        <authorList>
            <person name="Phua S.H."/>
            <person name="Srinivasa B.R."/>
            <person name="Subramanian A.R."/>
        </authorList>
    </citation>
    <scope>NUCLEOTIDE SEQUENCE [MRNA]</scope>
</reference>
<reference key="2">
    <citation type="journal article" date="2014" name="Nature">
        <title>The genome of the recently domesticated crop plant sugar beet (Beta vulgaris).</title>
        <authorList>
            <person name="Dohm J.C."/>
            <person name="Minoche A.E."/>
            <person name="Holtgraewe D."/>
            <person name="Capella-Gutierrez S."/>
            <person name="Zakrzewski F."/>
            <person name="Tafer H."/>
            <person name="Rupp O."/>
            <person name="Soerensen T.R."/>
            <person name="Stracke R."/>
            <person name="Reinhardt R."/>
            <person name="Goesmann A."/>
            <person name="Kraft T."/>
            <person name="Schulz B."/>
            <person name="Stadler P.F."/>
            <person name="Schmidt T."/>
            <person name="Gabaldon T."/>
            <person name="Lehrach H."/>
            <person name="Weisshaar B."/>
            <person name="Himmelbauer H."/>
        </authorList>
    </citation>
    <scope>NUCLEOTIDE SEQUENCE [LARGE SCALE GENOMIC DNA]</scope>
    <source>
        <strain>cv. Viroflay</strain>
        <tissue>Leaf</tissue>
    </source>
</reference>
<reference key="3">
    <citation type="journal article" date="2000" name="J. Biol. Chem.">
        <title>The plastid ribosomal proteins. Identification of all the proteins in the 50S subunit of an organelle ribosome (chloroplast).</title>
        <authorList>
            <person name="Yamaguchi K."/>
            <person name="Subramanian A.R."/>
        </authorList>
    </citation>
    <scope>PROTEIN SEQUENCE OF 48-53</scope>
    <scope>SUBUNIT</scope>
    <scope>SUBCELLULAR LOCATION</scope>
    <scope>MASS SPECTROMETRY</scope>
    <source>
        <strain>cv. Alwaro</strain>
        <tissue>Leaf</tissue>
    </source>
</reference>
<reference key="4">
    <citation type="journal article" date="1991" name="FEBS Lett.">
        <title>Expression and functional assembly into bacterial ribosomes of a nuclear-encoded chloroplast ribosomal protein with a long NH2-terminal extension.</title>
        <authorList>
            <person name="Giese K."/>
            <person name="Subramanian A.R."/>
        </authorList>
    </citation>
    <scope>FUNCTION</scope>
</reference>
<reference key="5">
    <citation type="journal article" date="2007" name="Proc. Natl. Acad. Sci. U.S.A.">
        <title>Cryo-EM study of the spinach chloroplast ribosome reveals the structural and functional roles of plastid-specific ribosomal proteins.</title>
        <authorList>
            <person name="Sharma M.R."/>
            <person name="Wilson D.N."/>
            <person name="Datta P.P."/>
            <person name="Barat C."/>
            <person name="Schluenzen F."/>
            <person name="Fucini P."/>
            <person name="Agrawal R.K."/>
        </authorList>
    </citation>
    <scope>STRUCTURE BY ELECTRON MICROSCOPY (9.4 ANGSTROMS)</scope>
</reference>
<reference key="6">
    <citation type="journal article" date="2016" name="Sci. Rep.">
        <title>Cryo-EM structure of the large subunit of the spinach chloroplast ribosome.</title>
        <authorList>
            <person name="Ahmed T."/>
            <person name="Yin Z."/>
            <person name="Bhushan S."/>
        </authorList>
    </citation>
    <scope>STRUCTURE BY ELECTRON MICROSCOPY (3.50 ANGSTROMS)</scope>
</reference>
<reference key="7">
    <citation type="journal article" date="2017" name="EMBO J.">
        <title>The complete structure of the chloroplast 70S ribosome in complex with translation factor pY.</title>
        <authorList>
            <person name="Bieri P."/>
            <person name="Leibundgut M."/>
            <person name="Saurer M."/>
            <person name="Boehringer D."/>
            <person name="Ban N."/>
        </authorList>
    </citation>
    <scope>STRUCTURE BY ELECTRON MICROSCOPY (3.25 ANGSTROMS)</scope>
    <scope>SUBUNIT</scope>
    <scope>SUBCELLULAR LOCATION</scope>
</reference>
<feature type="transit peptide" description="Chloroplast" evidence="1">
    <location>
        <begin position="1"/>
        <end position="47"/>
    </location>
</feature>
<feature type="chain" id="PRO_0000030461" description="Large ribosomal subunit protein uL13c">
    <location>
        <begin position="48"/>
        <end position="250"/>
    </location>
</feature>
<feature type="helix" evidence="8">
    <location>
        <begin position="53"/>
        <end position="72"/>
    </location>
</feature>
<feature type="strand" evidence="8">
    <location>
        <begin position="79"/>
        <end position="81"/>
    </location>
</feature>
<feature type="helix" evidence="8">
    <location>
        <begin position="89"/>
        <end position="91"/>
    </location>
</feature>
<feature type="strand" evidence="8">
    <location>
        <begin position="96"/>
        <end position="98"/>
    </location>
</feature>
<feature type="helix" evidence="8">
    <location>
        <begin position="104"/>
        <end position="107"/>
    </location>
</feature>
<feature type="helix" evidence="8">
    <location>
        <begin position="109"/>
        <end position="111"/>
    </location>
</feature>
<feature type="strand" evidence="8">
    <location>
        <begin position="114"/>
        <end position="118"/>
    </location>
</feature>
<feature type="helix" evidence="8">
    <location>
        <begin position="124"/>
        <end position="136"/>
    </location>
</feature>
<feature type="turn" evidence="8">
    <location>
        <begin position="137"/>
        <end position="139"/>
    </location>
</feature>
<feature type="strand" evidence="8">
    <location>
        <begin position="152"/>
        <end position="156"/>
    </location>
</feature>
<feature type="helix" evidence="9">
    <location>
        <begin position="158"/>
        <end position="160"/>
    </location>
</feature>
<feature type="helix" evidence="8">
    <location>
        <begin position="167"/>
        <end position="170"/>
    </location>
</feature>
<feature type="strand" evidence="8">
    <location>
        <begin position="172"/>
        <end position="176"/>
    </location>
</feature>
<feature type="strand" evidence="8">
    <location>
        <begin position="183"/>
        <end position="187"/>
    </location>
</feature>
<feature type="helix" evidence="8">
    <location>
        <begin position="188"/>
        <end position="194"/>
    </location>
</feature>
<feature type="helix" evidence="8">
    <location>
        <begin position="197"/>
        <end position="205"/>
    </location>
</feature>
<feature type="helix" evidence="8">
    <location>
        <begin position="212"/>
        <end position="218"/>
    </location>
</feature>
<feature type="strand" evidence="8">
    <location>
        <begin position="221"/>
        <end position="223"/>
    </location>
</feature>
<feature type="strand" evidence="8">
    <location>
        <begin position="225"/>
        <end position="227"/>
    </location>
</feature>
<feature type="helix" evidence="8">
    <location>
        <begin position="232"/>
        <end position="234"/>
    </location>
</feature>
<protein>
    <recommendedName>
        <fullName evidence="4">Large ribosomal subunit protein uL13c</fullName>
    </recommendedName>
    <alternativeName>
        <fullName evidence="3">50S ribosomal protein L13, chloroplastic</fullName>
    </alternativeName>
    <alternativeName>
        <fullName>CL13</fullName>
    </alternativeName>
</protein>
<organism>
    <name type="scientific">Spinacia oleracea</name>
    <name type="common">Spinach</name>
    <dbReference type="NCBI Taxonomy" id="3562"/>
    <lineage>
        <taxon>Eukaryota</taxon>
        <taxon>Viridiplantae</taxon>
        <taxon>Streptophyta</taxon>
        <taxon>Embryophyta</taxon>
        <taxon>Tracheophyta</taxon>
        <taxon>Spermatophyta</taxon>
        <taxon>Magnoliopsida</taxon>
        <taxon>eudicotyledons</taxon>
        <taxon>Gunneridae</taxon>
        <taxon>Pentapetalae</taxon>
        <taxon>Caryophyllales</taxon>
        <taxon>Chenopodiaceae</taxon>
        <taxon>Chenopodioideae</taxon>
        <taxon>Anserineae</taxon>
        <taxon>Spinacia</taxon>
    </lineage>
</organism>
<evidence type="ECO:0000269" key="1">
    <source>
    </source>
</evidence>
<evidence type="ECO:0000269" key="2">
    <source>
    </source>
</evidence>
<evidence type="ECO:0000303" key="3">
    <source>
    </source>
</evidence>
<evidence type="ECO:0000303" key="4">
    <source>
    </source>
</evidence>
<evidence type="ECO:0000305" key="5"/>
<evidence type="ECO:0000305" key="6">
    <source>
    </source>
</evidence>
<evidence type="ECO:0000305" key="7">
    <source>
    </source>
</evidence>
<evidence type="ECO:0007829" key="8">
    <source>
        <dbReference type="PDB" id="5MMI"/>
    </source>
</evidence>
<evidence type="ECO:0007829" key="9">
    <source>
        <dbReference type="PDB" id="5X8T"/>
    </source>
</evidence>
<comment type="function">
    <text evidence="6 7">Component of the chloroplast ribosome (chloro-ribosome), a dedicated translation machinery responsible for the synthesis of chloroplast genome-encoded proteins, including proteins of the transcription and translation machinery and components of the photosynthetic apparatus.</text>
</comment>
<comment type="subunit">
    <text evidence="1 2">Component of the chloroplast large ribosomal subunit (LSU). Mature 70S chloroplast ribosomes of higher plants consist of a small (30S) and a large (50S) subunit. The 30S small subunit contains 1 molecule of ribosomal RNA (16S rRNA) and 24 different proteins. The 50S large subunit contains 3 rRNA molecules (23S, 5S and 4.5S rRNA) and 33 different proteins.</text>
</comment>
<comment type="subcellular location">
    <subcellularLocation>
        <location evidence="1 2">Plastid</location>
        <location evidence="1 2">Chloroplast</location>
    </subcellularLocation>
</comment>
<comment type="mass spectrometry" mass="23365.0" method="Electrospray" evidence="1"/>
<comment type="similarity">
    <text evidence="5">Belongs to the universal ribosomal protein uL13 family.</text>
</comment>
<keyword id="KW-0002">3D-structure</keyword>
<keyword id="KW-0150">Chloroplast</keyword>
<keyword id="KW-0903">Direct protein sequencing</keyword>
<keyword id="KW-0934">Plastid</keyword>
<keyword id="KW-1185">Reference proteome</keyword>
<keyword id="KW-0687">Ribonucleoprotein</keyword>
<keyword id="KW-0689">Ribosomal protein</keyword>
<keyword id="KW-0809">Transit peptide</keyword>
<name>RK13_SPIOL</name>
<dbReference type="EMBL" id="J04461">
    <property type="protein sequence ID" value="AAA34040.1"/>
    <property type="molecule type" value="mRNA"/>
</dbReference>
<dbReference type="EMBL" id="KQ146763">
    <property type="protein sequence ID" value="KNA15999.1"/>
    <property type="molecule type" value="Genomic_DNA"/>
</dbReference>
<dbReference type="PIR" id="A32033">
    <property type="entry name" value="A32033"/>
</dbReference>
<dbReference type="PDB" id="4V61">
    <property type="method" value="EM"/>
    <property type="resolution" value="9.40 A"/>
    <property type="chains" value="BL=1-250"/>
</dbReference>
<dbReference type="PDB" id="5H1S">
    <property type="method" value="EM"/>
    <property type="resolution" value="3.50 A"/>
    <property type="chains" value="L=60-250"/>
</dbReference>
<dbReference type="PDB" id="5MLC">
    <property type="method" value="EM"/>
    <property type="resolution" value="3.90 A"/>
    <property type="chains" value="L=1-250"/>
</dbReference>
<dbReference type="PDB" id="5MMI">
    <property type="method" value="EM"/>
    <property type="resolution" value="3.25 A"/>
    <property type="chains" value="K=1-250"/>
</dbReference>
<dbReference type="PDB" id="5MMM">
    <property type="method" value="EM"/>
    <property type="resolution" value="3.40 A"/>
    <property type="chains" value="K=1-250"/>
</dbReference>
<dbReference type="PDB" id="5X8P">
    <property type="method" value="EM"/>
    <property type="resolution" value="3.40 A"/>
    <property type="chains" value="K=54-250"/>
</dbReference>
<dbReference type="PDB" id="5X8T">
    <property type="method" value="EM"/>
    <property type="resolution" value="3.30 A"/>
    <property type="chains" value="K=54-250"/>
</dbReference>
<dbReference type="PDB" id="6ERI">
    <property type="method" value="EM"/>
    <property type="resolution" value="3.00 A"/>
    <property type="chains" value="AJ=49-248"/>
</dbReference>
<dbReference type="PDBsum" id="4V61"/>
<dbReference type="PDBsum" id="5H1S"/>
<dbReference type="PDBsum" id="5MLC"/>
<dbReference type="PDBsum" id="5MMI"/>
<dbReference type="PDBsum" id="5MMM"/>
<dbReference type="PDBsum" id="5X8P"/>
<dbReference type="PDBsum" id="5X8T"/>
<dbReference type="PDBsum" id="6ERI"/>
<dbReference type="EMDB" id="EMD-3525"/>
<dbReference type="EMDB" id="EMD-3531"/>
<dbReference type="EMDB" id="EMD-3533"/>
<dbReference type="EMDB" id="EMD-3941"/>
<dbReference type="EMDB" id="EMD-6709"/>
<dbReference type="EMDB" id="EMD-6711"/>
<dbReference type="SMR" id="P12629"/>
<dbReference type="IntAct" id="P12629">
    <property type="interactions" value="1"/>
</dbReference>
<dbReference type="STRING" id="3562.P12629"/>
<dbReference type="OrthoDB" id="274622at2759"/>
<dbReference type="Proteomes" id="UP001155700">
    <property type="component" value="Unplaced"/>
</dbReference>
<dbReference type="GO" id="GO:0009507">
    <property type="term" value="C:chloroplast"/>
    <property type="evidence" value="ECO:0007669"/>
    <property type="project" value="UniProtKB-SubCell"/>
</dbReference>
<dbReference type="GO" id="GO:0022625">
    <property type="term" value="C:cytosolic large ribosomal subunit"/>
    <property type="evidence" value="ECO:0000318"/>
    <property type="project" value="GO_Central"/>
</dbReference>
<dbReference type="GO" id="GO:0005840">
    <property type="term" value="C:ribosome"/>
    <property type="evidence" value="ECO:0000318"/>
    <property type="project" value="GO_Central"/>
</dbReference>
<dbReference type="GO" id="GO:0003729">
    <property type="term" value="F:mRNA binding"/>
    <property type="evidence" value="ECO:0000318"/>
    <property type="project" value="GO_Central"/>
</dbReference>
<dbReference type="GO" id="GO:0003735">
    <property type="term" value="F:structural constituent of ribosome"/>
    <property type="evidence" value="ECO:0000318"/>
    <property type="project" value="GO_Central"/>
</dbReference>
<dbReference type="GO" id="GO:0017148">
    <property type="term" value="P:negative regulation of translation"/>
    <property type="evidence" value="ECO:0000318"/>
    <property type="project" value="GO_Central"/>
</dbReference>
<dbReference type="GO" id="GO:0006412">
    <property type="term" value="P:translation"/>
    <property type="evidence" value="ECO:0007669"/>
    <property type="project" value="InterPro"/>
</dbReference>
<dbReference type="CDD" id="cd00392">
    <property type="entry name" value="Ribosomal_L13"/>
    <property type="match status" value="1"/>
</dbReference>
<dbReference type="FunFam" id="3.90.1180.10:FF:000001">
    <property type="entry name" value="50S ribosomal protein L13"/>
    <property type="match status" value="1"/>
</dbReference>
<dbReference type="Gene3D" id="3.90.1180.10">
    <property type="entry name" value="Ribosomal protein L13"/>
    <property type="match status" value="1"/>
</dbReference>
<dbReference type="HAMAP" id="MF_01366">
    <property type="entry name" value="Ribosomal_uL13"/>
    <property type="match status" value="1"/>
</dbReference>
<dbReference type="InterPro" id="IPR005822">
    <property type="entry name" value="Ribosomal_uL13"/>
</dbReference>
<dbReference type="InterPro" id="IPR005823">
    <property type="entry name" value="Ribosomal_uL13_bac-type"/>
</dbReference>
<dbReference type="InterPro" id="IPR023563">
    <property type="entry name" value="Ribosomal_uL13_CS"/>
</dbReference>
<dbReference type="InterPro" id="IPR036899">
    <property type="entry name" value="Ribosomal_uL13_sf"/>
</dbReference>
<dbReference type="NCBIfam" id="TIGR01066">
    <property type="entry name" value="rplM_bact"/>
    <property type="match status" value="1"/>
</dbReference>
<dbReference type="PANTHER" id="PTHR11545:SF2">
    <property type="entry name" value="LARGE RIBOSOMAL SUBUNIT PROTEIN UL13M"/>
    <property type="match status" value="1"/>
</dbReference>
<dbReference type="PANTHER" id="PTHR11545">
    <property type="entry name" value="RIBOSOMAL PROTEIN L13"/>
    <property type="match status" value="1"/>
</dbReference>
<dbReference type="Pfam" id="PF00572">
    <property type="entry name" value="Ribosomal_L13"/>
    <property type="match status" value="1"/>
</dbReference>
<dbReference type="SUPFAM" id="SSF52161">
    <property type="entry name" value="Ribosomal protein L13"/>
    <property type="match status" value="1"/>
</dbReference>
<dbReference type="PROSITE" id="PS00783">
    <property type="entry name" value="RIBOSOMAL_L13"/>
    <property type="match status" value="1"/>
</dbReference>
<proteinExistence type="evidence at protein level"/>
<accession>P12629</accession>
<accession>A0A0K9RAG3</accession>